<proteinExistence type="inferred from homology"/>
<dbReference type="EC" id="2.7.7.27" evidence="1"/>
<dbReference type="EMBL" id="AE016958">
    <property type="protein sequence ID" value="AAS04881.1"/>
    <property type="molecule type" value="Genomic_DNA"/>
</dbReference>
<dbReference type="RefSeq" id="WP_003878468.1">
    <property type="nucleotide sequence ID" value="NZ_CP106873.1"/>
</dbReference>
<dbReference type="SMR" id="Q73WU6"/>
<dbReference type="STRING" id="262316.MAP_2564c"/>
<dbReference type="KEGG" id="mpa:MAP_2564c"/>
<dbReference type="PATRIC" id="fig|262316.17.peg.2721"/>
<dbReference type="eggNOG" id="COG0448">
    <property type="taxonomic scope" value="Bacteria"/>
</dbReference>
<dbReference type="HOGENOM" id="CLU_029499_14_1_11"/>
<dbReference type="UniPathway" id="UPA00164"/>
<dbReference type="UniPathway" id="UPA00934"/>
<dbReference type="Proteomes" id="UP000000580">
    <property type="component" value="Chromosome"/>
</dbReference>
<dbReference type="GO" id="GO:0005524">
    <property type="term" value="F:ATP binding"/>
    <property type="evidence" value="ECO:0007669"/>
    <property type="project" value="UniProtKB-KW"/>
</dbReference>
<dbReference type="GO" id="GO:0008878">
    <property type="term" value="F:glucose-1-phosphate adenylyltransferase activity"/>
    <property type="evidence" value="ECO:0007669"/>
    <property type="project" value="UniProtKB-UniRule"/>
</dbReference>
<dbReference type="GO" id="GO:0045227">
    <property type="term" value="P:capsule polysaccharide biosynthetic process"/>
    <property type="evidence" value="ECO:0007669"/>
    <property type="project" value="UniProtKB-UniPathway"/>
</dbReference>
<dbReference type="GO" id="GO:0005978">
    <property type="term" value="P:glycogen biosynthetic process"/>
    <property type="evidence" value="ECO:0007669"/>
    <property type="project" value="UniProtKB-UniRule"/>
</dbReference>
<dbReference type="CDD" id="cd02508">
    <property type="entry name" value="ADP_Glucose_PP"/>
    <property type="match status" value="1"/>
</dbReference>
<dbReference type="CDD" id="cd04651">
    <property type="entry name" value="LbH_G1P_AT_C"/>
    <property type="match status" value="1"/>
</dbReference>
<dbReference type="FunFam" id="2.160.10.10:FF:000020">
    <property type="entry name" value="Glucose-1-phosphate adenylyltransferase"/>
    <property type="match status" value="1"/>
</dbReference>
<dbReference type="FunFam" id="3.90.550.10:FF:000014">
    <property type="entry name" value="Glucose-1-phosphate adenylyltransferase"/>
    <property type="match status" value="1"/>
</dbReference>
<dbReference type="Gene3D" id="2.160.10.10">
    <property type="entry name" value="Hexapeptide repeat proteins"/>
    <property type="match status" value="1"/>
</dbReference>
<dbReference type="Gene3D" id="3.90.550.10">
    <property type="entry name" value="Spore Coat Polysaccharide Biosynthesis Protein SpsA, Chain A"/>
    <property type="match status" value="1"/>
</dbReference>
<dbReference type="HAMAP" id="MF_00624">
    <property type="entry name" value="GlgC"/>
    <property type="match status" value="1"/>
</dbReference>
<dbReference type="InterPro" id="IPR011831">
    <property type="entry name" value="ADP-Glc_PPase"/>
</dbReference>
<dbReference type="InterPro" id="IPR005836">
    <property type="entry name" value="ADP_Glu_pyroP_CS"/>
</dbReference>
<dbReference type="InterPro" id="IPR023049">
    <property type="entry name" value="GlgC_bac"/>
</dbReference>
<dbReference type="InterPro" id="IPR056818">
    <property type="entry name" value="GlmU/GlgC-like_hexapep"/>
</dbReference>
<dbReference type="InterPro" id="IPR005835">
    <property type="entry name" value="NTP_transferase_dom"/>
</dbReference>
<dbReference type="InterPro" id="IPR029044">
    <property type="entry name" value="Nucleotide-diphossugar_trans"/>
</dbReference>
<dbReference type="InterPro" id="IPR011004">
    <property type="entry name" value="Trimer_LpxA-like_sf"/>
</dbReference>
<dbReference type="NCBIfam" id="TIGR02091">
    <property type="entry name" value="glgC"/>
    <property type="match status" value="1"/>
</dbReference>
<dbReference type="NCBIfam" id="NF001947">
    <property type="entry name" value="PRK00725.1"/>
    <property type="match status" value="1"/>
</dbReference>
<dbReference type="NCBIfam" id="NF002023">
    <property type="entry name" value="PRK00844.1"/>
    <property type="match status" value="1"/>
</dbReference>
<dbReference type="PANTHER" id="PTHR43523:SF2">
    <property type="entry name" value="GLUCOSE-1-PHOSPHATE ADENYLYLTRANSFERASE"/>
    <property type="match status" value="1"/>
</dbReference>
<dbReference type="PANTHER" id="PTHR43523">
    <property type="entry name" value="GLUCOSE-1-PHOSPHATE ADENYLYLTRANSFERASE-RELATED"/>
    <property type="match status" value="1"/>
</dbReference>
<dbReference type="Pfam" id="PF24894">
    <property type="entry name" value="Hexapep_GlmU"/>
    <property type="match status" value="1"/>
</dbReference>
<dbReference type="Pfam" id="PF00483">
    <property type="entry name" value="NTP_transferase"/>
    <property type="match status" value="1"/>
</dbReference>
<dbReference type="SUPFAM" id="SSF53448">
    <property type="entry name" value="Nucleotide-diphospho-sugar transferases"/>
    <property type="match status" value="1"/>
</dbReference>
<dbReference type="SUPFAM" id="SSF51161">
    <property type="entry name" value="Trimeric LpxA-like enzymes"/>
    <property type="match status" value="1"/>
</dbReference>
<dbReference type="PROSITE" id="PS00808">
    <property type="entry name" value="ADP_GLC_PYROPHOSPH_1"/>
    <property type="match status" value="1"/>
</dbReference>
<dbReference type="PROSITE" id="PS00809">
    <property type="entry name" value="ADP_GLC_PYROPHOSPH_2"/>
    <property type="match status" value="1"/>
</dbReference>
<dbReference type="PROSITE" id="PS00810">
    <property type="entry name" value="ADP_GLC_PYROPHOSPH_3"/>
    <property type="match status" value="1"/>
</dbReference>
<reference key="1">
    <citation type="journal article" date="2005" name="Proc. Natl. Acad. Sci. U.S.A.">
        <title>The complete genome sequence of Mycobacterium avium subspecies paratuberculosis.</title>
        <authorList>
            <person name="Li L."/>
            <person name="Bannantine J.P."/>
            <person name="Zhang Q."/>
            <person name="Amonsin A."/>
            <person name="May B.J."/>
            <person name="Alt D."/>
            <person name="Banerji N."/>
            <person name="Kanjilal S."/>
            <person name="Kapur V."/>
        </authorList>
    </citation>
    <scope>NUCLEOTIDE SEQUENCE [LARGE SCALE GENOMIC DNA]</scope>
    <source>
        <strain>ATCC BAA-968 / K-10</strain>
    </source>
</reference>
<name>GLGC_MYCPA</name>
<keyword id="KW-0067">ATP-binding</keyword>
<keyword id="KW-0119">Carbohydrate metabolism</keyword>
<keyword id="KW-0320">Glycogen biosynthesis</keyword>
<keyword id="KW-0321">Glycogen metabolism</keyword>
<keyword id="KW-0547">Nucleotide-binding</keyword>
<keyword id="KW-0548">Nucleotidyltransferase</keyword>
<keyword id="KW-1185">Reference proteome</keyword>
<keyword id="KW-0808">Transferase</keyword>
<sequence>MREAPHVLGIVLAGGEGKRLYPLTADRAKPAVPFGGAYRLIDFVLSNLVNARYLRICVLTQYKSHSLDRHISQNWRLSGLAGEYITPVPAQQRLGPRWYTGSADAIYQSLNLIYDEDPDYIVVFGADHVYRMDPEQMVRLHIDSGAGATVAGIRVPRSEATAFGCIDSDESGRIRKFVEKPLDPPGTPDDPETTFVSMGNYIFTTKVLIDAIRADADDDHSDHDMGGDIIPRLVDDGMAAVYDFSDNEVPGATDRDRGYWRDVGTLDAFYDAHMDLVSVHPVFNLYNKRWPIRGESENLAPAKFVNGGSAQESVVGAGSIISAASVRNSVLSSNVVVDDGAIVEGSVIMPGARVGRGAVVRHAILDKNVVVGPGEMVGVDLERDRERFAISAGGVVAVGKGVWI</sequence>
<protein>
    <recommendedName>
        <fullName evidence="1">Glucose-1-phosphate adenylyltransferase</fullName>
        <ecNumber evidence="1">2.7.7.27</ecNumber>
    </recommendedName>
    <alternativeName>
        <fullName evidence="1">ADP-glucose pyrophosphorylase</fullName>
        <shortName evidence="1">ADPGlc PPase</shortName>
    </alternativeName>
    <alternativeName>
        <fullName evidence="1">ADP-glucose synthase</fullName>
    </alternativeName>
</protein>
<evidence type="ECO:0000255" key="1">
    <source>
        <dbReference type="HAMAP-Rule" id="MF_00624"/>
    </source>
</evidence>
<evidence type="ECO:0000305" key="2"/>
<comment type="function">
    <text evidence="1">Involved in the biosynthesis of ADP-glucose, a building block, required in the biosynthesis of maltose-1-phosphate (M1P) and in the elongation reactions to produce linear alpha-1,4-glucans. Catalyzes the reaction between ATP and alpha-D-glucose 1-phosphate (G1P) to produce pyrophosphate and ADP-Glc.</text>
</comment>
<comment type="catalytic activity">
    <reaction evidence="1">
        <text>alpha-D-glucose 1-phosphate + ATP + H(+) = ADP-alpha-D-glucose + diphosphate</text>
        <dbReference type="Rhea" id="RHEA:12120"/>
        <dbReference type="ChEBI" id="CHEBI:15378"/>
        <dbReference type="ChEBI" id="CHEBI:30616"/>
        <dbReference type="ChEBI" id="CHEBI:33019"/>
        <dbReference type="ChEBI" id="CHEBI:57498"/>
        <dbReference type="ChEBI" id="CHEBI:58601"/>
        <dbReference type="EC" id="2.7.7.27"/>
    </reaction>
</comment>
<comment type="pathway">
    <text evidence="2">Capsule biogenesis; capsule polysaccharide biosynthesis.</text>
</comment>
<comment type="pathway">
    <text evidence="1">Glycan biosynthesis; glycogen biosynthesis.</text>
</comment>
<comment type="similarity">
    <text evidence="1">Belongs to the bacterial/plant glucose-1-phosphate adenylyltransferase family.</text>
</comment>
<organism>
    <name type="scientific">Mycolicibacterium paratuberculosis (strain ATCC BAA-968 / K-10)</name>
    <name type="common">Mycobacterium paratuberculosis</name>
    <dbReference type="NCBI Taxonomy" id="262316"/>
    <lineage>
        <taxon>Bacteria</taxon>
        <taxon>Bacillati</taxon>
        <taxon>Actinomycetota</taxon>
        <taxon>Actinomycetes</taxon>
        <taxon>Mycobacteriales</taxon>
        <taxon>Mycobacteriaceae</taxon>
        <taxon>Mycobacterium</taxon>
        <taxon>Mycobacterium avium complex (MAC)</taxon>
    </lineage>
</organism>
<gene>
    <name evidence="1" type="primary">glgC</name>
    <name type="ordered locus">MAP_2564c</name>
</gene>
<accession>Q73WU6</accession>
<feature type="chain" id="PRO_0000195308" description="Glucose-1-phosphate adenylyltransferase">
    <location>
        <begin position="1"/>
        <end position="404"/>
    </location>
</feature>
<feature type="binding site" evidence="1">
    <location>
        <position position="99"/>
    </location>
    <ligand>
        <name>alpha-D-glucose 1-phosphate</name>
        <dbReference type="ChEBI" id="CHEBI:58601"/>
    </ligand>
</feature>
<feature type="binding site" evidence="1">
    <location>
        <position position="164"/>
    </location>
    <ligand>
        <name>alpha-D-glucose 1-phosphate</name>
        <dbReference type="ChEBI" id="CHEBI:58601"/>
    </ligand>
</feature>
<feature type="binding site" evidence="1">
    <location>
        <begin position="179"/>
        <end position="180"/>
    </location>
    <ligand>
        <name>alpha-D-glucose 1-phosphate</name>
        <dbReference type="ChEBI" id="CHEBI:58601"/>
    </ligand>
</feature>
<feature type="binding site" evidence="1">
    <location>
        <position position="197"/>
    </location>
    <ligand>
        <name>alpha-D-glucose 1-phosphate</name>
        <dbReference type="ChEBI" id="CHEBI:58601"/>
    </ligand>
</feature>